<gene>
    <name type="ordered locus">RP714</name>
</gene>
<dbReference type="EMBL" id="AJ235273">
    <property type="protein sequence ID" value="CAA15147.1"/>
    <property type="molecule type" value="Genomic_DNA"/>
</dbReference>
<dbReference type="PIR" id="C71631">
    <property type="entry name" value="C71631"/>
</dbReference>
<dbReference type="RefSeq" id="NP_221071.1">
    <property type="nucleotide sequence ID" value="NC_000963.1"/>
</dbReference>
<dbReference type="RefSeq" id="WP_004598910.1">
    <property type="nucleotide sequence ID" value="NC_000963.1"/>
</dbReference>
<dbReference type="SMR" id="Q9ZCL3"/>
<dbReference type="STRING" id="272947.gene:17555788"/>
<dbReference type="EnsemblBacteria" id="CAA15147">
    <property type="protein sequence ID" value="CAA15147"/>
    <property type="gene ID" value="CAA15147"/>
</dbReference>
<dbReference type="KEGG" id="rpr:RP714"/>
<dbReference type="PATRIC" id="fig|272947.5.peg.742"/>
<dbReference type="eggNOG" id="COG0666">
    <property type="taxonomic scope" value="Bacteria"/>
</dbReference>
<dbReference type="HOGENOM" id="CLU_000134_45_8_5"/>
<dbReference type="OrthoDB" id="7166355at2"/>
<dbReference type="Proteomes" id="UP000002480">
    <property type="component" value="Chromosome"/>
</dbReference>
<dbReference type="Gene3D" id="1.25.40.20">
    <property type="entry name" value="Ankyrin repeat-containing domain"/>
    <property type="match status" value="1"/>
</dbReference>
<dbReference type="InterPro" id="IPR002110">
    <property type="entry name" value="Ankyrin_rpt"/>
</dbReference>
<dbReference type="InterPro" id="IPR036770">
    <property type="entry name" value="Ankyrin_rpt-contain_sf"/>
</dbReference>
<dbReference type="PANTHER" id="PTHR24198">
    <property type="entry name" value="ANKYRIN REPEAT AND PROTEIN KINASE DOMAIN-CONTAINING PROTEIN"/>
    <property type="match status" value="1"/>
</dbReference>
<dbReference type="PANTHER" id="PTHR24198:SF165">
    <property type="entry name" value="ANKYRIN REPEAT-CONTAINING PROTEIN-RELATED"/>
    <property type="match status" value="1"/>
</dbReference>
<dbReference type="Pfam" id="PF12796">
    <property type="entry name" value="Ank_2"/>
    <property type="match status" value="1"/>
</dbReference>
<dbReference type="SMART" id="SM00248">
    <property type="entry name" value="ANK"/>
    <property type="match status" value="3"/>
</dbReference>
<dbReference type="SUPFAM" id="SSF48403">
    <property type="entry name" value="Ankyrin repeat"/>
    <property type="match status" value="1"/>
</dbReference>
<dbReference type="PROSITE" id="PS50297">
    <property type="entry name" value="ANK_REP_REGION"/>
    <property type="match status" value="1"/>
</dbReference>
<dbReference type="PROSITE" id="PS50088">
    <property type="entry name" value="ANK_REPEAT"/>
    <property type="match status" value="3"/>
</dbReference>
<protein>
    <recommendedName>
        <fullName>Putative ankyrin repeat protein RP714</fullName>
    </recommendedName>
</protein>
<accession>Q9ZCL3</accession>
<keyword id="KW-0040">ANK repeat</keyword>
<keyword id="KW-1185">Reference proteome</keyword>
<keyword id="KW-0677">Repeat</keyword>
<feature type="chain" id="PRO_0000067241" description="Putative ankyrin repeat protein RP714">
    <location>
        <begin position="1"/>
        <end position="107"/>
    </location>
</feature>
<feature type="repeat" description="ANK 1">
    <location>
        <begin position="7"/>
        <end position="36"/>
    </location>
</feature>
<feature type="repeat" description="ANK 2">
    <location>
        <begin position="40"/>
        <end position="69"/>
    </location>
</feature>
<feature type="repeat" description="ANK 3">
    <location>
        <begin position="73"/>
        <end position="102"/>
    </location>
</feature>
<proteinExistence type="predicted"/>
<organism>
    <name type="scientific">Rickettsia prowazekii (strain Madrid E)</name>
    <dbReference type="NCBI Taxonomy" id="272947"/>
    <lineage>
        <taxon>Bacteria</taxon>
        <taxon>Pseudomonadati</taxon>
        <taxon>Pseudomonadota</taxon>
        <taxon>Alphaproteobacteria</taxon>
        <taxon>Rickettsiales</taxon>
        <taxon>Rickettsiaceae</taxon>
        <taxon>Rickettsieae</taxon>
        <taxon>Rickettsia</taxon>
        <taxon>typhus group</taxon>
    </lineage>
</organism>
<sequence length="107" mass="11665">MPQLLTPPLSPLIIAVLNGNIEYTSELLQNGVDIDVRDKNGNSALHIAASKGYTKIATMLLLYGATIDAPNFELATPLHYAAANNYKDLTQYLLNMNANKSAVNKYN</sequence>
<name>Y714_RICPR</name>
<reference key="1">
    <citation type="journal article" date="1998" name="Nature">
        <title>The genome sequence of Rickettsia prowazekii and the origin of mitochondria.</title>
        <authorList>
            <person name="Andersson S.G.E."/>
            <person name="Zomorodipour A."/>
            <person name="Andersson J.O."/>
            <person name="Sicheritz-Ponten T."/>
            <person name="Alsmark U.C.M."/>
            <person name="Podowski R.M."/>
            <person name="Naeslund A.K."/>
            <person name="Eriksson A.-S."/>
            <person name="Winkler H.H."/>
            <person name="Kurland C.G."/>
        </authorList>
    </citation>
    <scope>NUCLEOTIDE SEQUENCE [LARGE SCALE GENOMIC DNA]</scope>
    <source>
        <strain>Madrid E</strain>
    </source>
</reference>